<feature type="chain" id="PRO_0000223220" description="Auxin-responsive protein IAA21">
    <location>
        <begin position="1"/>
        <end position="266"/>
    </location>
</feature>
<feature type="domain" description="PB1" evidence="2">
    <location>
        <begin position="146"/>
        <end position="248"/>
    </location>
</feature>
<feature type="region of interest" description="Disordered" evidence="3">
    <location>
        <begin position="27"/>
        <end position="50"/>
    </location>
</feature>
<feature type="short sequence motif" description="EAR-like (transcriptional repression)" evidence="1">
    <location>
        <begin position="24"/>
        <end position="28"/>
    </location>
</feature>
<feature type="sequence conflict" description="In Ref. 4; AK121989." evidence="5" ref="4">
    <original>E</original>
    <variation>EE</variation>
    <location>
        <position position="90"/>
    </location>
</feature>
<keyword id="KW-0927">Auxin signaling pathway</keyword>
<keyword id="KW-0539">Nucleus</keyword>
<keyword id="KW-1185">Reference proteome</keyword>
<keyword id="KW-0678">Repressor</keyword>
<keyword id="KW-0804">Transcription</keyword>
<keyword id="KW-0805">Transcription regulation</keyword>
<name>IAA21_ORYSJ</name>
<accession>Q5Z749</accession>
<accession>Q0DCF5</accession>
<dbReference type="EMBL" id="AP004784">
    <property type="protein sequence ID" value="BAD61890.1"/>
    <property type="molecule type" value="Genomic_DNA"/>
</dbReference>
<dbReference type="EMBL" id="AP008212">
    <property type="protein sequence ID" value="BAF19468.1"/>
    <property type="molecule type" value="Genomic_DNA"/>
</dbReference>
<dbReference type="EMBL" id="AP014962">
    <property type="protein sequence ID" value="BAS97586.1"/>
    <property type="molecule type" value="Genomic_DNA"/>
</dbReference>
<dbReference type="EMBL" id="AK121989">
    <property type="status" value="NOT_ANNOTATED_CDS"/>
    <property type="molecule type" value="mRNA"/>
</dbReference>
<dbReference type="RefSeq" id="XP_015644240.1">
    <property type="nucleotide sequence ID" value="XM_015788754.1"/>
</dbReference>
<dbReference type="SMR" id="Q5Z749"/>
<dbReference type="FunCoup" id="Q5Z749">
    <property type="interactions" value="852"/>
</dbReference>
<dbReference type="STRING" id="39947.Q5Z749"/>
<dbReference type="PaxDb" id="39947-Q5Z749"/>
<dbReference type="EnsemblPlants" id="Os06t0335500-01">
    <property type="protein sequence ID" value="Os06t0335500-01"/>
    <property type="gene ID" value="Os06g0335500"/>
</dbReference>
<dbReference type="Gramene" id="Os06t0335500-01">
    <property type="protein sequence ID" value="Os06t0335500-01"/>
    <property type="gene ID" value="Os06g0335500"/>
</dbReference>
<dbReference type="KEGG" id="dosa:Os06g0335500"/>
<dbReference type="eggNOG" id="ENOG502QTW8">
    <property type="taxonomic scope" value="Eukaryota"/>
</dbReference>
<dbReference type="HOGENOM" id="CLU_049393_1_2_1"/>
<dbReference type="InParanoid" id="Q5Z749"/>
<dbReference type="OMA" id="NTMAMSQ"/>
<dbReference type="OrthoDB" id="734810at2759"/>
<dbReference type="PlantReactome" id="R-OSA-5608118">
    <property type="pathway name" value="Auxin signalling"/>
</dbReference>
<dbReference type="Proteomes" id="UP000000763">
    <property type="component" value="Chromosome 6"/>
</dbReference>
<dbReference type="Proteomes" id="UP000059680">
    <property type="component" value="Chromosome 6"/>
</dbReference>
<dbReference type="ExpressionAtlas" id="Q5Z749">
    <property type="expression patterns" value="baseline and differential"/>
</dbReference>
<dbReference type="GO" id="GO:0005634">
    <property type="term" value="C:nucleus"/>
    <property type="evidence" value="ECO:0007669"/>
    <property type="project" value="UniProtKB-SubCell"/>
</dbReference>
<dbReference type="GO" id="GO:0009734">
    <property type="term" value="P:auxin-activated signaling pathway"/>
    <property type="evidence" value="ECO:0007669"/>
    <property type="project" value="UniProtKB-KW"/>
</dbReference>
<dbReference type="GO" id="GO:0006355">
    <property type="term" value="P:regulation of DNA-templated transcription"/>
    <property type="evidence" value="ECO:0007669"/>
    <property type="project" value="InterPro"/>
</dbReference>
<dbReference type="GO" id="GO:0009733">
    <property type="term" value="P:response to auxin"/>
    <property type="evidence" value="ECO:0000305"/>
    <property type="project" value="Gramene"/>
</dbReference>
<dbReference type="FunFam" id="3.10.20.90:FF:000078">
    <property type="entry name" value="Auxin-responsive protein"/>
    <property type="match status" value="1"/>
</dbReference>
<dbReference type="Gene3D" id="3.10.20.90">
    <property type="entry name" value="Phosphatidylinositol 3-kinase Catalytic Subunit, Chain A, domain 1"/>
    <property type="match status" value="1"/>
</dbReference>
<dbReference type="InterPro" id="IPR033389">
    <property type="entry name" value="AUX/IAA_dom"/>
</dbReference>
<dbReference type="InterPro" id="IPR003311">
    <property type="entry name" value="AUX_IAA"/>
</dbReference>
<dbReference type="InterPro" id="IPR053793">
    <property type="entry name" value="PB1-like"/>
</dbReference>
<dbReference type="PANTHER" id="PTHR31734">
    <property type="entry name" value="AUXIN-RESPONSIVE PROTEIN IAA17"/>
    <property type="match status" value="1"/>
</dbReference>
<dbReference type="PANTHER" id="PTHR31734:SF252">
    <property type="entry name" value="AUXIN-RESPONSIVE PROTEIN IAA21"/>
    <property type="match status" value="1"/>
</dbReference>
<dbReference type="Pfam" id="PF02309">
    <property type="entry name" value="AUX_IAA"/>
    <property type="match status" value="1"/>
</dbReference>
<dbReference type="SUPFAM" id="SSF54277">
    <property type="entry name" value="CAD &amp; PB1 domains"/>
    <property type="match status" value="1"/>
</dbReference>
<dbReference type="PROSITE" id="PS51745">
    <property type="entry name" value="PB1"/>
    <property type="match status" value="1"/>
</dbReference>
<evidence type="ECO:0000250" key="1"/>
<evidence type="ECO:0000255" key="2">
    <source>
        <dbReference type="PROSITE-ProRule" id="PRU01081"/>
    </source>
</evidence>
<evidence type="ECO:0000256" key="3">
    <source>
        <dbReference type="SAM" id="MobiDB-lite"/>
    </source>
</evidence>
<evidence type="ECO:0000269" key="4">
    <source>
    </source>
</evidence>
<evidence type="ECO:0000305" key="5"/>
<gene>
    <name type="primary">IAA21</name>
    <name type="ordered locus">Os06g0335500</name>
    <name type="ordered locus">LOC_Os06g22870</name>
    <name type="ORF">OSJNBa0012F14.28</name>
</gene>
<comment type="function">
    <text evidence="1">Aux/IAA proteins are short-lived transcriptional factors that function as repressors of early auxin response genes at low auxin concentrations.</text>
</comment>
<comment type="subunit">
    <text evidence="1">Homodimers and heterodimers.</text>
</comment>
<comment type="subcellular location">
    <subcellularLocation>
        <location evidence="1">Nucleus</location>
    </subcellularLocation>
</comment>
<comment type="tissue specificity">
    <text evidence="4">Highly expressed in flowers. Expressed in roots and seedlings.</text>
</comment>
<comment type="induction">
    <text evidence="4">By auxin.</text>
</comment>
<comment type="similarity">
    <text evidence="5">Belongs to the Aux/IAA family.</text>
</comment>
<protein>
    <recommendedName>
        <fullName>Auxin-responsive protein IAA21</fullName>
    </recommendedName>
    <alternativeName>
        <fullName>Indoleacetic acid-induced protein 21</fullName>
    </alternativeName>
</protein>
<proteinExistence type="evidence at transcript level"/>
<reference key="1">
    <citation type="journal article" date="2005" name="Nature">
        <title>The map-based sequence of the rice genome.</title>
        <authorList>
            <consortium name="International rice genome sequencing project (IRGSP)"/>
        </authorList>
    </citation>
    <scope>NUCLEOTIDE SEQUENCE [LARGE SCALE GENOMIC DNA]</scope>
    <source>
        <strain>cv. Nipponbare</strain>
    </source>
</reference>
<reference key="2">
    <citation type="journal article" date="2008" name="Nucleic Acids Res.">
        <title>The rice annotation project database (RAP-DB): 2008 update.</title>
        <authorList>
            <consortium name="The rice annotation project (RAP)"/>
        </authorList>
    </citation>
    <scope>GENOME REANNOTATION</scope>
    <source>
        <strain>cv. Nipponbare</strain>
    </source>
</reference>
<reference key="3">
    <citation type="journal article" date="2013" name="Rice">
        <title>Improvement of the Oryza sativa Nipponbare reference genome using next generation sequence and optical map data.</title>
        <authorList>
            <person name="Kawahara Y."/>
            <person name="de la Bastide M."/>
            <person name="Hamilton J.P."/>
            <person name="Kanamori H."/>
            <person name="McCombie W.R."/>
            <person name="Ouyang S."/>
            <person name="Schwartz D.C."/>
            <person name="Tanaka T."/>
            <person name="Wu J."/>
            <person name="Zhou S."/>
            <person name="Childs K.L."/>
            <person name="Davidson R.M."/>
            <person name="Lin H."/>
            <person name="Quesada-Ocampo L."/>
            <person name="Vaillancourt B."/>
            <person name="Sakai H."/>
            <person name="Lee S.S."/>
            <person name="Kim J."/>
            <person name="Numa H."/>
            <person name="Itoh T."/>
            <person name="Buell C.R."/>
            <person name="Matsumoto T."/>
        </authorList>
    </citation>
    <scope>GENOME REANNOTATION</scope>
    <source>
        <strain>cv. Nipponbare</strain>
    </source>
</reference>
<reference key="4">
    <citation type="journal article" date="2003" name="Science">
        <title>Collection, mapping, and annotation of over 28,000 cDNA clones from japonica rice.</title>
        <authorList>
            <consortium name="The rice full-length cDNA consortium"/>
        </authorList>
    </citation>
    <scope>NUCLEOTIDE SEQUENCE [LARGE SCALE MRNA]</scope>
    <source>
        <strain>cv. Nipponbare</strain>
    </source>
</reference>
<reference key="5">
    <citation type="journal article" date="2006" name="Funct. Integr. Genomics">
        <title>Structure and expression analysis of early auxin-responsive Aux/IAA gene family in rice (Oryza sativa).</title>
        <authorList>
            <person name="Jain M."/>
            <person name="Kaur N."/>
            <person name="Garg R."/>
            <person name="Thakur J.K."/>
            <person name="Tyagi A.K."/>
            <person name="Khurana J.P."/>
        </authorList>
    </citation>
    <scope>TISSUE SPECIFICITY</scope>
    <scope>INDUCTION</scope>
    <scope>NOMENCLATURE</scope>
</reference>
<sequence length="266" mass="28224">MAPPQERDYIGLSPAAAAALATELRLGLPGTAEEAESEGGGGGGTDAAPLTLELLPKGGAKRGFADAIVGGPAGQRREAAGGKAAAAAAEAEEEEEKKKAQAPAAKAQVVGWPPIRSYRKNTMAMSQPALKGKDDGEAKQAPASGCLYVKVSMDGAPYLRKVDLKMYKNYKELSLALEKMFSCFTVGHGESNGKSGRDGLSDCRLMDLKNGTELVLTYEDKDEDWMLVGDVPWRMFTDSCRRLRIMKGSDAVGLAPRATDKSKNRN</sequence>
<organism>
    <name type="scientific">Oryza sativa subsp. japonica</name>
    <name type="common">Rice</name>
    <dbReference type="NCBI Taxonomy" id="39947"/>
    <lineage>
        <taxon>Eukaryota</taxon>
        <taxon>Viridiplantae</taxon>
        <taxon>Streptophyta</taxon>
        <taxon>Embryophyta</taxon>
        <taxon>Tracheophyta</taxon>
        <taxon>Spermatophyta</taxon>
        <taxon>Magnoliopsida</taxon>
        <taxon>Liliopsida</taxon>
        <taxon>Poales</taxon>
        <taxon>Poaceae</taxon>
        <taxon>BOP clade</taxon>
        <taxon>Oryzoideae</taxon>
        <taxon>Oryzeae</taxon>
        <taxon>Oryzinae</taxon>
        <taxon>Oryza</taxon>
        <taxon>Oryza sativa</taxon>
    </lineage>
</organism>